<proteinExistence type="inferred from homology"/>
<gene>
    <name evidence="1" type="primary">fbp</name>
    <name type="ordered locus">BAB2_0364</name>
</gene>
<keyword id="KW-0119">Carbohydrate metabolism</keyword>
<keyword id="KW-0963">Cytoplasm</keyword>
<keyword id="KW-0378">Hydrolase</keyword>
<keyword id="KW-0460">Magnesium</keyword>
<keyword id="KW-0479">Metal-binding</keyword>
<keyword id="KW-1185">Reference proteome</keyword>
<name>F16PA_BRUA2</name>
<comment type="catalytic activity">
    <reaction evidence="1">
        <text>beta-D-fructose 1,6-bisphosphate + H2O = beta-D-fructose 6-phosphate + phosphate</text>
        <dbReference type="Rhea" id="RHEA:11064"/>
        <dbReference type="ChEBI" id="CHEBI:15377"/>
        <dbReference type="ChEBI" id="CHEBI:32966"/>
        <dbReference type="ChEBI" id="CHEBI:43474"/>
        <dbReference type="ChEBI" id="CHEBI:57634"/>
        <dbReference type="EC" id="3.1.3.11"/>
    </reaction>
</comment>
<comment type="cofactor">
    <cofactor evidence="1">
        <name>Mg(2+)</name>
        <dbReference type="ChEBI" id="CHEBI:18420"/>
    </cofactor>
    <text evidence="1">Binds 2 magnesium ions per subunit.</text>
</comment>
<comment type="pathway">
    <text evidence="1">Carbohydrate biosynthesis; gluconeogenesis.</text>
</comment>
<comment type="subunit">
    <text evidence="1">Homotetramer.</text>
</comment>
<comment type="subcellular location">
    <subcellularLocation>
        <location evidence="1">Cytoplasm</location>
    </subcellularLocation>
</comment>
<comment type="similarity">
    <text evidence="1">Belongs to the FBPase class 1 family.</text>
</comment>
<reference key="1">
    <citation type="journal article" date="2005" name="Infect. Immun.">
        <title>Whole-genome analyses of speciation events in pathogenic Brucellae.</title>
        <authorList>
            <person name="Chain P.S."/>
            <person name="Comerci D.J."/>
            <person name="Tolmasky M.E."/>
            <person name="Larimer F.W."/>
            <person name="Malfatti S.A."/>
            <person name="Vergez L.M."/>
            <person name="Aguero F."/>
            <person name="Land M.L."/>
            <person name="Ugalde R.A."/>
            <person name="Garcia E."/>
        </authorList>
    </citation>
    <scope>NUCLEOTIDE SEQUENCE [LARGE SCALE GENOMIC DNA]</scope>
    <source>
        <strain>2308</strain>
    </source>
</reference>
<protein>
    <recommendedName>
        <fullName evidence="1">Fructose-1,6-bisphosphatase class 1</fullName>
        <shortName evidence="1">FBPase class 1</shortName>
        <ecNumber evidence="1">3.1.3.11</ecNumber>
    </recommendedName>
    <alternativeName>
        <fullName evidence="1">D-fructose-1,6-bisphosphate 1-phosphohydrolase class 1</fullName>
    </alternativeName>
</protein>
<dbReference type="EC" id="3.1.3.11" evidence="1"/>
<dbReference type="EMBL" id="AM040265">
    <property type="protein sequence ID" value="CAJ12530.1"/>
    <property type="molecule type" value="Genomic_DNA"/>
</dbReference>
<dbReference type="RefSeq" id="WP_002965774.1">
    <property type="nucleotide sequence ID" value="NZ_KN046823.1"/>
</dbReference>
<dbReference type="SMR" id="Q2YIQ9"/>
<dbReference type="STRING" id="359391.BAB2_0364"/>
<dbReference type="KEGG" id="bmf:BAB2_0364"/>
<dbReference type="PATRIC" id="fig|359391.11.peg.2316"/>
<dbReference type="HOGENOM" id="CLU_039977_0_0_5"/>
<dbReference type="PhylomeDB" id="Q2YIQ9"/>
<dbReference type="UniPathway" id="UPA00138"/>
<dbReference type="Proteomes" id="UP000002719">
    <property type="component" value="Chromosome II"/>
</dbReference>
<dbReference type="GO" id="GO:0005829">
    <property type="term" value="C:cytosol"/>
    <property type="evidence" value="ECO:0007669"/>
    <property type="project" value="TreeGrafter"/>
</dbReference>
<dbReference type="GO" id="GO:0042132">
    <property type="term" value="F:fructose 1,6-bisphosphate 1-phosphatase activity"/>
    <property type="evidence" value="ECO:0007669"/>
    <property type="project" value="UniProtKB-UniRule"/>
</dbReference>
<dbReference type="GO" id="GO:0000287">
    <property type="term" value="F:magnesium ion binding"/>
    <property type="evidence" value="ECO:0007669"/>
    <property type="project" value="UniProtKB-UniRule"/>
</dbReference>
<dbReference type="GO" id="GO:0030388">
    <property type="term" value="P:fructose 1,6-bisphosphate metabolic process"/>
    <property type="evidence" value="ECO:0007669"/>
    <property type="project" value="TreeGrafter"/>
</dbReference>
<dbReference type="GO" id="GO:0006002">
    <property type="term" value="P:fructose 6-phosphate metabolic process"/>
    <property type="evidence" value="ECO:0007669"/>
    <property type="project" value="TreeGrafter"/>
</dbReference>
<dbReference type="GO" id="GO:0006000">
    <property type="term" value="P:fructose metabolic process"/>
    <property type="evidence" value="ECO:0007669"/>
    <property type="project" value="TreeGrafter"/>
</dbReference>
<dbReference type="GO" id="GO:0006094">
    <property type="term" value="P:gluconeogenesis"/>
    <property type="evidence" value="ECO:0007669"/>
    <property type="project" value="UniProtKB-UniRule"/>
</dbReference>
<dbReference type="GO" id="GO:0005986">
    <property type="term" value="P:sucrose biosynthetic process"/>
    <property type="evidence" value="ECO:0007669"/>
    <property type="project" value="TreeGrafter"/>
</dbReference>
<dbReference type="CDD" id="cd00354">
    <property type="entry name" value="FBPase"/>
    <property type="match status" value="1"/>
</dbReference>
<dbReference type="Gene3D" id="3.40.190.80">
    <property type="match status" value="1"/>
</dbReference>
<dbReference type="Gene3D" id="3.30.540.10">
    <property type="entry name" value="Fructose-1,6-Bisphosphatase, subunit A, domain 1"/>
    <property type="match status" value="1"/>
</dbReference>
<dbReference type="HAMAP" id="MF_01855">
    <property type="entry name" value="FBPase_class1"/>
    <property type="match status" value="1"/>
</dbReference>
<dbReference type="InterPro" id="IPR044015">
    <property type="entry name" value="FBPase_C_dom"/>
</dbReference>
<dbReference type="InterPro" id="IPR000146">
    <property type="entry name" value="FBPase_class-1"/>
</dbReference>
<dbReference type="InterPro" id="IPR033391">
    <property type="entry name" value="FBPase_N"/>
</dbReference>
<dbReference type="InterPro" id="IPR028343">
    <property type="entry name" value="FBPtase"/>
</dbReference>
<dbReference type="InterPro" id="IPR020548">
    <property type="entry name" value="Fructose_bisphosphatase_AS"/>
</dbReference>
<dbReference type="NCBIfam" id="NF006780">
    <property type="entry name" value="PRK09293.1-4"/>
    <property type="match status" value="1"/>
</dbReference>
<dbReference type="PANTHER" id="PTHR11556">
    <property type="entry name" value="FRUCTOSE-1,6-BISPHOSPHATASE-RELATED"/>
    <property type="match status" value="1"/>
</dbReference>
<dbReference type="PANTHER" id="PTHR11556:SF35">
    <property type="entry name" value="SEDOHEPTULOSE-1,7-BISPHOSPHATASE, CHLOROPLASTIC"/>
    <property type="match status" value="1"/>
</dbReference>
<dbReference type="Pfam" id="PF00316">
    <property type="entry name" value="FBPase"/>
    <property type="match status" value="1"/>
</dbReference>
<dbReference type="Pfam" id="PF18913">
    <property type="entry name" value="FBPase_C"/>
    <property type="match status" value="1"/>
</dbReference>
<dbReference type="PIRSF" id="PIRSF500210">
    <property type="entry name" value="FBPtase"/>
    <property type="match status" value="1"/>
</dbReference>
<dbReference type="PIRSF" id="PIRSF000904">
    <property type="entry name" value="FBPtase_SBPase"/>
    <property type="match status" value="1"/>
</dbReference>
<dbReference type="PRINTS" id="PR00115">
    <property type="entry name" value="F16BPHPHTASE"/>
</dbReference>
<dbReference type="SUPFAM" id="SSF56655">
    <property type="entry name" value="Carbohydrate phosphatase"/>
    <property type="match status" value="1"/>
</dbReference>
<dbReference type="PROSITE" id="PS00124">
    <property type="entry name" value="FBPASE"/>
    <property type="match status" value="1"/>
</dbReference>
<feature type="chain" id="PRO_0000364477" description="Fructose-1,6-bisphosphatase class 1">
    <location>
        <begin position="1"/>
        <end position="340"/>
    </location>
</feature>
<feature type="binding site" evidence="1">
    <location>
        <position position="107"/>
    </location>
    <ligand>
        <name>Mg(2+)</name>
        <dbReference type="ChEBI" id="CHEBI:18420"/>
        <label>1</label>
    </ligand>
</feature>
<feature type="binding site" evidence="1">
    <location>
        <position position="126"/>
    </location>
    <ligand>
        <name>Mg(2+)</name>
        <dbReference type="ChEBI" id="CHEBI:18420"/>
        <label>1</label>
    </ligand>
</feature>
<feature type="binding site" evidence="1">
    <location>
        <position position="126"/>
    </location>
    <ligand>
        <name>Mg(2+)</name>
        <dbReference type="ChEBI" id="CHEBI:18420"/>
        <label>2</label>
    </ligand>
</feature>
<feature type="binding site" evidence="1">
    <location>
        <position position="128"/>
    </location>
    <ligand>
        <name>Mg(2+)</name>
        <dbReference type="ChEBI" id="CHEBI:18420"/>
        <label>1</label>
    </ligand>
</feature>
<feature type="binding site" evidence="1">
    <location>
        <position position="129"/>
    </location>
    <ligand>
        <name>Mg(2+)</name>
        <dbReference type="ChEBI" id="CHEBI:18420"/>
        <label>2</label>
    </ligand>
</feature>
<feature type="binding site" evidence="1">
    <location>
        <position position="215"/>
    </location>
    <ligand>
        <name>substrate</name>
    </ligand>
</feature>
<feature type="binding site" evidence="1">
    <location>
        <position position="287"/>
    </location>
    <ligand>
        <name>Mg(2+)</name>
        <dbReference type="ChEBI" id="CHEBI:18420"/>
        <label>2</label>
    </ligand>
</feature>
<evidence type="ECO:0000255" key="1">
    <source>
        <dbReference type="HAMAP-Rule" id="MF_01855"/>
    </source>
</evidence>
<accession>Q2YIQ9</accession>
<sequence length="340" mass="36156">MTLVGNFSPLVLVGDSDRVEAETVGAYLDGWAGHDKVRLATANAIKAILSGAGRLVGRIARGYLPGDPGKLVGVNSDQDQQKSIDVGSHNLFVELLIAAGVASILSEEADLPVAGKADGLVAVAIDPLDGSGNVGLGAPLGTIFSIFPADVEEPFLQPGNRQIAAGYVSYGNSVDLGFSVGEGVIFATLDPVSGQFHITRRNVKLPERTSDLAFNASVQRHLSAGMQAYVNDAFLGKDGPRGRNFNMRWLGAAVGDMHRIMQRGGLFFYVNDSRPGYEKGRLRLVYEANPIAFLAREAGGKATDGSRPILDIVPQTYHERSALVFGVAEEVDILGEYFVK</sequence>
<organism>
    <name type="scientific">Brucella abortus (strain 2308)</name>
    <dbReference type="NCBI Taxonomy" id="359391"/>
    <lineage>
        <taxon>Bacteria</taxon>
        <taxon>Pseudomonadati</taxon>
        <taxon>Pseudomonadota</taxon>
        <taxon>Alphaproteobacteria</taxon>
        <taxon>Hyphomicrobiales</taxon>
        <taxon>Brucellaceae</taxon>
        <taxon>Brucella/Ochrobactrum group</taxon>
        <taxon>Brucella</taxon>
    </lineage>
</organism>